<feature type="chain" id="PRO_0000318249" description="Protein-export protein SecB">
    <location>
        <begin position="1"/>
        <end position="159"/>
    </location>
</feature>
<proteinExistence type="inferred from homology"/>
<gene>
    <name evidence="1" type="primary">secB</name>
    <name type="ordered locus">Nwi_0106</name>
</gene>
<keyword id="KW-0143">Chaperone</keyword>
<keyword id="KW-0963">Cytoplasm</keyword>
<keyword id="KW-0653">Protein transport</keyword>
<keyword id="KW-1185">Reference proteome</keyword>
<keyword id="KW-0811">Translocation</keyword>
<keyword id="KW-0813">Transport</keyword>
<comment type="function">
    <text evidence="1">One of the proteins required for the normal export of preproteins out of the cell cytoplasm. It is a molecular chaperone that binds to a subset of precursor proteins, maintaining them in a translocation-competent state. It also specifically binds to its receptor SecA.</text>
</comment>
<comment type="subunit">
    <text evidence="1">Homotetramer, a dimer of dimers. One homotetramer interacts with 1 SecA dimer.</text>
</comment>
<comment type="subcellular location">
    <subcellularLocation>
        <location evidence="1">Cytoplasm</location>
    </subcellularLocation>
</comment>
<comment type="similarity">
    <text evidence="1">Belongs to the SecB family.</text>
</comment>
<reference key="1">
    <citation type="journal article" date="2006" name="Appl. Environ. Microbiol.">
        <title>Genome sequence of the chemolithoautotrophic nitrite-oxidizing bacterium Nitrobacter winogradskyi Nb-255.</title>
        <authorList>
            <person name="Starkenburg S.R."/>
            <person name="Chain P.S.G."/>
            <person name="Sayavedra-Soto L.A."/>
            <person name="Hauser L."/>
            <person name="Land M.L."/>
            <person name="Larimer F.W."/>
            <person name="Malfatti S.A."/>
            <person name="Klotz M.G."/>
            <person name="Bottomley P.J."/>
            <person name="Arp D.J."/>
            <person name="Hickey W.J."/>
        </authorList>
    </citation>
    <scope>NUCLEOTIDE SEQUENCE [LARGE SCALE GENOMIC DNA]</scope>
    <source>
        <strain>ATCC 25391 / DSM 10237 / CIP 104748 / NCIMB 11846 / Nb-255</strain>
    </source>
</reference>
<name>SECB_NITWN</name>
<dbReference type="EMBL" id="CP000115">
    <property type="protein sequence ID" value="ABA03374.1"/>
    <property type="molecule type" value="Genomic_DNA"/>
</dbReference>
<dbReference type="RefSeq" id="WP_011313443.1">
    <property type="nucleotide sequence ID" value="NC_007406.1"/>
</dbReference>
<dbReference type="SMR" id="Q3SWG7"/>
<dbReference type="STRING" id="323098.Nwi_0106"/>
<dbReference type="KEGG" id="nwi:Nwi_0106"/>
<dbReference type="eggNOG" id="COG1952">
    <property type="taxonomic scope" value="Bacteria"/>
</dbReference>
<dbReference type="HOGENOM" id="CLU_111574_0_0_5"/>
<dbReference type="OrthoDB" id="9795145at2"/>
<dbReference type="Proteomes" id="UP000002531">
    <property type="component" value="Chromosome"/>
</dbReference>
<dbReference type="GO" id="GO:0005737">
    <property type="term" value="C:cytoplasm"/>
    <property type="evidence" value="ECO:0007669"/>
    <property type="project" value="UniProtKB-SubCell"/>
</dbReference>
<dbReference type="GO" id="GO:0051082">
    <property type="term" value="F:unfolded protein binding"/>
    <property type="evidence" value="ECO:0007669"/>
    <property type="project" value="InterPro"/>
</dbReference>
<dbReference type="GO" id="GO:0006457">
    <property type="term" value="P:protein folding"/>
    <property type="evidence" value="ECO:0007669"/>
    <property type="project" value="UniProtKB-UniRule"/>
</dbReference>
<dbReference type="GO" id="GO:0051262">
    <property type="term" value="P:protein tetramerization"/>
    <property type="evidence" value="ECO:0007669"/>
    <property type="project" value="InterPro"/>
</dbReference>
<dbReference type="GO" id="GO:0015031">
    <property type="term" value="P:protein transport"/>
    <property type="evidence" value="ECO:0007669"/>
    <property type="project" value="UniProtKB-UniRule"/>
</dbReference>
<dbReference type="Gene3D" id="3.10.420.10">
    <property type="entry name" value="SecB-like"/>
    <property type="match status" value="1"/>
</dbReference>
<dbReference type="HAMAP" id="MF_00821">
    <property type="entry name" value="SecB"/>
    <property type="match status" value="1"/>
</dbReference>
<dbReference type="InterPro" id="IPR003708">
    <property type="entry name" value="SecB"/>
</dbReference>
<dbReference type="InterPro" id="IPR035958">
    <property type="entry name" value="SecB-like_sf"/>
</dbReference>
<dbReference type="NCBIfam" id="NF004392">
    <property type="entry name" value="PRK05751.1-3"/>
    <property type="match status" value="1"/>
</dbReference>
<dbReference type="NCBIfam" id="TIGR00809">
    <property type="entry name" value="secB"/>
    <property type="match status" value="1"/>
</dbReference>
<dbReference type="PANTHER" id="PTHR36918">
    <property type="match status" value="1"/>
</dbReference>
<dbReference type="PANTHER" id="PTHR36918:SF1">
    <property type="entry name" value="PROTEIN-EXPORT PROTEIN SECB"/>
    <property type="match status" value="1"/>
</dbReference>
<dbReference type="Pfam" id="PF02556">
    <property type="entry name" value="SecB"/>
    <property type="match status" value="1"/>
</dbReference>
<dbReference type="PRINTS" id="PR01594">
    <property type="entry name" value="SECBCHAPRONE"/>
</dbReference>
<dbReference type="SUPFAM" id="SSF54611">
    <property type="entry name" value="SecB-like"/>
    <property type="match status" value="1"/>
</dbReference>
<accession>Q3SWG7</accession>
<protein>
    <recommendedName>
        <fullName evidence="1">Protein-export protein SecB</fullName>
    </recommendedName>
</protein>
<sequence length="159" mass="17453">MTNGNGTPPETAPSPQLNVLAQYTKDFSFENPNSPASLAPQQQPPSINVQINVGASNVAENDYEVVLKVEGKAEHAGKLMFSFELAYAGVFRIVNVPQENLHPLVMIECPRLLFPFAREIVATAVRDGGFPPLMLDPIDFVSLYRQNMERQAAAQQQPS</sequence>
<organism>
    <name type="scientific">Nitrobacter winogradskyi (strain ATCC 25391 / DSM 10237 / CIP 104748 / NCIMB 11846 / Nb-255)</name>
    <dbReference type="NCBI Taxonomy" id="323098"/>
    <lineage>
        <taxon>Bacteria</taxon>
        <taxon>Pseudomonadati</taxon>
        <taxon>Pseudomonadota</taxon>
        <taxon>Alphaproteobacteria</taxon>
        <taxon>Hyphomicrobiales</taxon>
        <taxon>Nitrobacteraceae</taxon>
        <taxon>Nitrobacter</taxon>
    </lineage>
</organism>
<evidence type="ECO:0000255" key="1">
    <source>
        <dbReference type="HAMAP-Rule" id="MF_00821"/>
    </source>
</evidence>